<protein>
    <recommendedName>
        <fullName evidence="1">Small ribosomal subunit protein uS9</fullName>
    </recommendedName>
    <alternativeName>
        <fullName evidence="2">30S ribosomal protein S9</fullName>
    </alternativeName>
</protein>
<reference key="1">
    <citation type="journal article" date="2002" name="Environ. Microbiol.">
        <title>Complete genome sequence and comparative analysis of the metabolically versatile Pseudomonas putida KT2440.</title>
        <authorList>
            <person name="Nelson K.E."/>
            <person name="Weinel C."/>
            <person name="Paulsen I.T."/>
            <person name="Dodson R.J."/>
            <person name="Hilbert H."/>
            <person name="Martins dos Santos V.A.P."/>
            <person name="Fouts D.E."/>
            <person name="Gill S.R."/>
            <person name="Pop M."/>
            <person name="Holmes M."/>
            <person name="Brinkac L.M."/>
            <person name="Beanan M.J."/>
            <person name="DeBoy R.T."/>
            <person name="Daugherty S.C."/>
            <person name="Kolonay J.F."/>
            <person name="Madupu R."/>
            <person name="Nelson W.C."/>
            <person name="White O."/>
            <person name="Peterson J.D."/>
            <person name="Khouri H.M."/>
            <person name="Hance I."/>
            <person name="Chris Lee P."/>
            <person name="Holtzapple E.K."/>
            <person name="Scanlan D."/>
            <person name="Tran K."/>
            <person name="Moazzez A."/>
            <person name="Utterback T.R."/>
            <person name="Rizzo M."/>
            <person name="Lee K."/>
            <person name="Kosack D."/>
            <person name="Moestl D."/>
            <person name="Wedler H."/>
            <person name="Lauber J."/>
            <person name="Stjepandic D."/>
            <person name="Hoheisel J."/>
            <person name="Straetz M."/>
            <person name="Heim S."/>
            <person name="Kiewitz C."/>
            <person name="Eisen J.A."/>
            <person name="Timmis K.N."/>
            <person name="Duesterhoeft A."/>
            <person name="Tuemmler B."/>
            <person name="Fraser C.M."/>
        </authorList>
    </citation>
    <scope>NUCLEOTIDE SEQUENCE [LARGE SCALE GENOMIC DNA]</scope>
    <source>
        <strain>ATCC 47054 / DSM 6125 / CFBP 8728 / NCIMB 11950 / KT2440</strain>
    </source>
</reference>
<sequence>MSATQNYGTGRRKTATARVFLRPGTGNISINNRSLDVFFGRETARMVVRQPLELTESVEKFDIYVTVSGGGVSGQAGAIRHGITRALMEYDETLRGALRRAGYVTRDAREVERKKVGLRKARKRPQYSKR</sequence>
<evidence type="ECO:0000255" key="1">
    <source>
        <dbReference type="HAMAP-Rule" id="MF_00532"/>
    </source>
</evidence>
<evidence type="ECO:0000305" key="2"/>
<proteinExistence type="inferred from homology"/>
<organism>
    <name type="scientific">Pseudomonas putida (strain ATCC 47054 / DSM 6125 / CFBP 8728 / NCIMB 11950 / KT2440)</name>
    <dbReference type="NCBI Taxonomy" id="160488"/>
    <lineage>
        <taxon>Bacteria</taxon>
        <taxon>Pseudomonadati</taxon>
        <taxon>Pseudomonadota</taxon>
        <taxon>Gammaproteobacteria</taxon>
        <taxon>Pseudomonadales</taxon>
        <taxon>Pseudomonadaceae</taxon>
        <taxon>Pseudomonas</taxon>
    </lineage>
</organism>
<gene>
    <name evidence="1" type="primary">rpsI</name>
    <name type="ordered locus">PP_1316</name>
</gene>
<dbReference type="EMBL" id="AE015451">
    <property type="protein sequence ID" value="AAN66940.1"/>
    <property type="molecule type" value="Genomic_DNA"/>
</dbReference>
<dbReference type="RefSeq" id="NP_743476.1">
    <property type="nucleotide sequence ID" value="NC_002947.4"/>
</dbReference>
<dbReference type="RefSeq" id="WP_003251821.1">
    <property type="nucleotide sequence ID" value="NZ_CP169744.1"/>
</dbReference>
<dbReference type="SMR" id="Q88N96"/>
<dbReference type="STRING" id="160488.PP_1316"/>
<dbReference type="PaxDb" id="160488-PP_1316"/>
<dbReference type="GeneID" id="93440874"/>
<dbReference type="KEGG" id="ppu:PP_1316"/>
<dbReference type="PATRIC" id="fig|160488.4.peg.1395"/>
<dbReference type="eggNOG" id="COG0103">
    <property type="taxonomic scope" value="Bacteria"/>
</dbReference>
<dbReference type="HOGENOM" id="CLU_046483_2_1_6"/>
<dbReference type="OrthoDB" id="9803965at2"/>
<dbReference type="PhylomeDB" id="Q88N96"/>
<dbReference type="BioCyc" id="PPUT160488:G1G01-1403-MONOMER"/>
<dbReference type="Proteomes" id="UP000000556">
    <property type="component" value="Chromosome"/>
</dbReference>
<dbReference type="GO" id="GO:0022627">
    <property type="term" value="C:cytosolic small ribosomal subunit"/>
    <property type="evidence" value="ECO:0007669"/>
    <property type="project" value="TreeGrafter"/>
</dbReference>
<dbReference type="GO" id="GO:0003723">
    <property type="term" value="F:RNA binding"/>
    <property type="evidence" value="ECO:0007669"/>
    <property type="project" value="TreeGrafter"/>
</dbReference>
<dbReference type="GO" id="GO:0003735">
    <property type="term" value="F:structural constituent of ribosome"/>
    <property type="evidence" value="ECO:0007669"/>
    <property type="project" value="InterPro"/>
</dbReference>
<dbReference type="GO" id="GO:0006412">
    <property type="term" value="P:translation"/>
    <property type="evidence" value="ECO:0007669"/>
    <property type="project" value="UniProtKB-UniRule"/>
</dbReference>
<dbReference type="FunFam" id="3.30.230.10:FF:000001">
    <property type="entry name" value="30S ribosomal protein S9"/>
    <property type="match status" value="1"/>
</dbReference>
<dbReference type="Gene3D" id="3.30.230.10">
    <property type="match status" value="1"/>
</dbReference>
<dbReference type="HAMAP" id="MF_00532_B">
    <property type="entry name" value="Ribosomal_uS9_B"/>
    <property type="match status" value="1"/>
</dbReference>
<dbReference type="InterPro" id="IPR020568">
    <property type="entry name" value="Ribosomal_Su5_D2-typ_SF"/>
</dbReference>
<dbReference type="InterPro" id="IPR000754">
    <property type="entry name" value="Ribosomal_uS9"/>
</dbReference>
<dbReference type="InterPro" id="IPR023035">
    <property type="entry name" value="Ribosomal_uS9_bac/plastid"/>
</dbReference>
<dbReference type="InterPro" id="IPR020574">
    <property type="entry name" value="Ribosomal_uS9_CS"/>
</dbReference>
<dbReference type="InterPro" id="IPR014721">
    <property type="entry name" value="Ribsml_uS5_D2-typ_fold_subgr"/>
</dbReference>
<dbReference type="NCBIfam" id="NF001099">
    <property type="entry name" value="PRK00132.1"/>
    <property type="match status" value="1"/>
</dbReference>
<dbReference type="PANTHER" id="PTHR21569">
    <property type="entry name" value="RIBOSOMAL PROTEIN S9"/>
    <property type="match status" value="1"/>
</dbReference>
<dbReference type="PANTHER" id="PTHR21569:SF1">
    <property type="entry name" value="SMALL RIBOSOMAL SUBUNIT PROTEIN US9M"/>
    <property type="match status" value="1"/>
</dbReference>
<dbReference type="Pfam" id="PF00380">
    <property type="entry name" value="Ribosomal_S9"/>
    <property type="match status" value="1"/>
</dbReference>
<dbReference type="SUPFAM" id="SSF54211">
    <property type="entry name" value="Ribosomal protein S5 domain 2-like"/>
    <property type="match status" value="1"/>
</dbReference>
<dbReference type="PROSITE" id="PS00360">
    <property type="entry name" value="RIBOSOMAL_S9"/>
    <property type="match status" value="1"/>
</dbReference>
<feature type="chain" id="PRO_0000111392" description="Small ribosomal subunit protein uS9">
    <location>
        <begin position="1"/>
        <end position="130"/>
    </location>
</feature>
<name>RS9_PSEPK</name>
<accession>Q88N96</accession>
<keyword id="KW-1185">Reference proteome</keyword>
<keyword id="KW-0687">Ribonucleoprotein</keyword>
<keyword id="KW-0689">Ribosomal protein</keyword>
<comment type="similarity">
    <text evidence="1">Belongs to the universal ribosomal protein uS9 family.</text>
</comment>